<feature type="chain" id="PRO_0000119690" description="Glutamate--tRNA ligase">
    <location>
        <begin position="1"/>
        <end position="482"/>
    </location>
</feature>
<feature type="short sequence motif" description="'HIGH' region" evidence="1">
    <location>
        <begin position="9"/>
        <end position="19"/>
    </location>
</feature>
<feature type="short sequence motif" description="'KMSKS' region" evidence="1">
    <location>
        <begin position="252"/>
        <end position="256"/>
    </location>
</feature>
<feature type="binding site" evidence="1">
    <location>
        <position position="255"/>
    </location>
    <ligand>
        <name>ATP</name>
        <dbReference type="ChEBI" id="CHEBI:30616"/>
    </ligand>
</feature>
<proteinExistence type="inferred from homology"/>
<evidence type="ECO:0000255" key="1">
    <source>
        <dbReference type="HAMAP-Rule" id="MF_00022"/>
    </source>
</evidence>
<keyword id="KW-0030">Aminoacyl-tRNA synthetase</keyword>
<keyword id="KW-0067">ATP-binding</keyword>
<keyword id="KW-0963">Cytoplasm</keyword>
<keyword id="KW-0436">Ligase</keyword>
<keyword id="KW-0547">Nucleotide-binding</keyword>
<keyword id="KW-0648">Protein biosynthesis</keyword>
<keyword id="KW-1185">Reference proteome</keyword>
<name>SYE_UREPA</name>
<reference key="1">
    <citation type="journal article" date="2000" name="Nature">
        <title>The complete sequence of the mucosal pathogen Ureaplasma urealyticum.</title>
        <authorList>
            <person name="Glass J.I."/>
            <person name="Lefkowitz E.J."/>
            <person name="Glass J.S."/>
            <person name="Heiner C.R."/>
            <person name="Chen E.Y."/>
            <person name="Cassell G.H."/>
        </authorList>
    </citation>
    <scope>NUCLEOTIDE SEQUENCE [LARGE SCALE GENOMIC DNA]</scope>
    <source>
        <strain>ATCC 700970</strain>
    </source>
</reference>
<organism>
    <name type="scientific">Ureaplasma parvum serovar 3 (strain ATCC 700970)</name>
    <dbReference type="NCBI Taxonomy" id="273119"/>
    <lineage>
        <taxon>Bacteria</taxon>
        <taxon>Bacillati</taxon>
        <taxon>Mycoplasmatota</taxon>
        <taxon>Mycoplasmoidales</taxon>
        <taxon>Mycoplasmoidaceae</taxon>
        <taxon>Ureaplasma</taxon>
    </lineage>
</organism>
<sequence length="482" mass="55909">MKIRTRYAPSPTGYLHIGGARTALFNYLLAKAYGGDFIIRIEDTDIERNVEGGINSQLDFLAWMGIIPDESIRNPKAFGPYIQSEKLKHYEKLALDLVDQKKAYFCFCSKEQLDADRELAEKSHQTPKYKRHCLNLDKKTIESNLLQNKEYTIRLKINENMEYSWDDLIRGKISIPGSALTDPVILKSNKIAMYNFAVVIDDYEMQISHVIRGEEHISNTPYQLAIAQALNYDITKIKYGHLSIIVDETGKKLSKRNLSLKQFVSDYEKDGYWPHAITNFVALLGWSPKNNDEIMSLETMIKNFDINNLSKSPAFFDINKMNWFSTQYFNNITQEEFINFIKKHSLTKELVLNDYTFINKCLLFKSHIINLKQLIDLVIEQFNCDKKVLASDVDYIKKNQLITVVRVFYEQLIINDEFNEEFIKEIIKKVQIITNNKGANLYMPIRIATTFSSHGPELAKTICYLGREKVLKNLINILKILD</sequence>
<gene>
    <name evidence="1" type="primary">gltX</name>
    <name type="ordered locus">UU599</name>
</gene>
<protein>
    <recommendedName>
        <fullName evidence="1">Glutamate--tRNA ligase</fullName>
        <ecNumber evidence="1">6.1.1.17</ecNumber>
    </recommendedName>
    <alternativeName>
        <fullName evidence="1">Glutamyl-tRNA synthetase</fullName>
        <shortName evidence="1">GluRS</shortName>
    </alternativeName>
</protein>
<accession>Q9PPP0</accession>
<dbReference type="EC" id="6.1.1.17" evidence="1"/>
<dbReference type="EMBL" id="AF222894">
    <property type="protein sequence ID" value="AAF31013.1"/>
    <property type="molecule type" value="Genomic_DNA"/>
</dbReference>
<dbReference type="RefSeq" id="WP_006688453.1">
    <property type="nucleotide sequence ID" value="NC_002162.1"/>
</dbReference>
<dbReference type="SMR" id="Q9PPP0"/>
<dbReference type="STRING" id="273119.UU599"/>
<dbReference type="EnsemblBacteria" id="AAF31013">
    <property type="protein sequence ID" value="AAF31013"/>
    <property type="gene ID" value="UU599"/>
</dbReference>
<dbReference type="GeneID" id="29672199"/>
<dbReference type="KEGG" id="uur:UU599"/>
<dbReference type="eggNOG" id="COG0008">
    <property type="taxonomic scope" value="Bacteria"/>
</dbReference>
<dbReference type="HOGENOM" id="CLU_015768_6_1_14"/>
<dbReference type="OrthoDB" id="9807503at2"/>
<dbReference type="Proteomes" id="UP000000423">
    <property type="component" value="Chromosome"/>
</dbReference>
<dbReference type="GO" id="GO:0005829">
    <property type="term" value="C:cytosol"/>
    <property type="evidence" value="ECO:0007669"/>
    <property type="project" value="TreeGrafter"/>
</dbReference>
<dbReference type="GO" id="GO:0005524">
    <property type="term" value="F:ATP binding"/>
    <property type="evidence" value="ECO:0007669"/>
    <property type="project" value="UniProtKB-UniRule"/>
</dbReference>
<dbReference type="GO" id="GO:0004818">
    <property type="term" value="F:glutamate-tRNA ligase activity"/>
    <property type="evidence" value="ECO:0007669"/>
    <property type="project" value="UniProtKB-UniRule"/>
</dbReference>
<dbReference type="GO" id="GO:0000049">
    <property type="term" value="F:tRNA binding"/>
    <property type="evidence" value="ECO:0007669"/>
    <property type="project" value="InterPro"/>
</dbReference>
<dbReference type="GO" id="GO:0008270">
    <property type="term" value="F:zinc ion binding"/>
    <property type="evidence" value="ECO:0007669"/>
    <property type="project" value="InterPro"/>
</dbReference>
<dbReference type="GO" id="GO:0006424">
    <property type="term" value="P:glutamyl-tRNA aminoacylation"/>
    <property type="evidence" value="ECO:0007669"/>
    <property type="project" value="UniProtKB-UniRule"/>
</dbReference>
<dbReference type="CDD" id="cd00808">
    <property type="entry name" value="GluRS_core"/>
    <property type="match status" value="1"/>
</dbReference>
<dbReference type="FunFam" id="3.40.50.620:FF:000007">
    <property type="entry name" value="Glutamate--tRNA ligase"/>
    <property type="match status" value="1"/>
</dbReference>
<dbReference type="Gene3D" id="1.10.10.350">
    <property type="match status" value="1"/>
</dbReference>
<dbReference type="Gene3D" id="3.40.50.620">
    <property type="entry name" value="HUPs"/>
    <property type="match status" value="1"/>
</dbReference>
<dbReference type="HAMAP" id="MF_00022">
    <property type="entry name" value="Glu_tRNA_synth_type1"/>
    <property type="match status" value="1"/>
</dbReference>
<dbReference type="InterPro" id="IPR045462">
    <property type="entry name" value="aa-tRNA-synth_I_cd-bd"/>
</dbReference>
<dbReference type="InterPro" id="IPR020751">
    <property type="entry name" value="aa-tRNA-synth_I_codon-bd_sub2"/>
</dbReference>
<dbReference type="InterPro" id="IPR001412">
    <property type="entry name" value="aa-tRNA-synth_I_CS"/>
</dbReference>
<dbReference type="InterPro" id="IPR008925">
    <property type="entry name" value="aa_tRNA-synth_I_cd-bd_sf"/>
</dbReference>
<dbReference type="InterPro" id="IPR004527">
    <property type="entry name" value="Glu-tRNA-ligase_bac/mito"/>
</dbReference>
<dbReference type="InterPro" id="IPR000924">
    <property type="entry name" value="Glu/Gln-tRNA-synth"/>
</dbReference>
<dbReference type="InterPro" id="IPR020058">
    <property type="entry name" value="Glu/Gln-tRNA-synth_Ib_cat-dom"/>
</dbReference>
<dbReference type="InterPro" id="IPR049940">
    <property type="entry name" value="GluQ/Sye"/>
</dbReference>
<dbReference type="InterPro" id="IPR033910">
    <property type="entry name" value="GluRS_core"/>
</dbReference>
<dbReference type="InterPro" id="IPR014729">
    <property type="entry name" value="Rossmann-like_a/b/a_fold"/>
</dbReference>
<dbReference type="NCBIfam" id="TIGR00464">
    <property type="entry name" value="gltX_bact"/>
    <property type="match status" value="1"/>
</dbReference>
<dbReference type="PANTHER" id="PTHR43311">
    <property type="entry name" value="GLUTAMATE--TRNA LIGASE"/>
    <property type="match status" value="1"/>
</dbReference>
<dbReference type="PANTHER" id="PTHR43311:SF2">
    <property type="entry name" value="GLUTAMATE--TRNA LIGASE, MITOCHONDRIAL-RELATED"/>
    <property type="match status" value="1"/>
</dbReference>
<dbReference type="Pfam" id="PF19269">
    <property type="entry name" value="Anticodon_2"/>
    <property type="match status" value="1"/>
</dbReference>
<dbReference type="Pfam" id="PF00749">
    <property type="entry name" value="tRNA-synt_1c"/>
    <property type="match status" value="1"/>
</dbReference>
<dbReference type="PRINTS" id="PR00987">
    <property type="entry name" value="TRNASYNTHGLU"/>
</dbReference>
<dbReference type="SUPFAM" id="SSF48163">
    <property type="entry name" value="An anticodon-binding domain of class I aminoacyl-tRNA synthetases"/>
    <property type="match status" value="1"/>
</dbReference>
<dbReference type="SUPFAM" id="SSF52374">
    <property type="entry name" value="Nucleotidylyl transferase"/>
    <property type="match status" value="1"/>
</dbReference>
<dbReference type="PROSITE" id="PS00178">
    <property type="entry name" value="AA_TRNA_LIGASE_I"/>
    <property type="match status" value="1"/>
</dbReference>
<comment type="function">
    <text evidence="1">Catalyzes the attachment of glutamate to tRNA(Glu) in a two-step reaction: glutamate is first activated by ATP to form Glu-AMP and then transferred to the acceptor end of tRNA(Glu).</text>
</comment>
<comment type="catalytic activity">
    <reaction evidence="1">
        <text>tRNA(Glu) + L-glutamate + ATP = L-glutamyl-tRNA(Glu) + AMP + diphosphate</text>
        <dbReference type="Rhea" id="RHEA:23540"/>
        <dbReference type="Rhea" id="RHEA-COMP:9663"/>
        <dbReference type="Rhea" id="RHEA-COMP:9680"/>
        <dbReference type="ChEBI" id="CHEBI:29985"/>
        <dbReference type="ChEBI" id="CHEBI:30616"/>
        <dbReference type="ChEBI" id="CHEBI:33019"/>
        <dbReference type="ChEBI" id="CHEBI:78442"/>
        <dbReference type="ChEBI" id="CHEBI:78520"/>
        <dbReference type="ChEBI" id="CHEBI:456215"/>
        <dbReference type="EC" id="6.1.1.17"/>
    </reaction>
</comment>
<comment type="subunit">
    <text evidence="1">Monomer.</text>
</comment>
<comment type="subcellular location">
    <subcellularLocation>
        <location evidence="1">Cytoplasm</location>
    </subcellularLocation>
</comment>
<comment type="similarity">
    <text evidence="1">Belongs to the class-I aminoacyl-tRNA synthetase family. Glutamate--tRNA ligase type 1 subfamily.</text>
</comment>